<protein>
    <recommendedName>
        <fullName>Probable deoxyhypusine synthase</fullName>
        <shortName>DHS</shortName>
        <ecNumber>2.5.1.46</ecNumber>
    </recommendedName>
</protein>
<feature type="chain" id="PRO_0000134509" description="Probable deoxyhypusine synthase">
    <location>
        <begin position="1"/>
        <end position="311"/>
    </location>
</feature>
<feature type="active site" description="Nucleophile" evidence="1">
    <location>
        <position position="284"/>
    </location>
</feature>
<accession>Q971T3</accession>
<gene>
    <name type="primary">dys</name>
    <name type="ordered locus">STK_12930</name>
</gene>
<name>DHYS_SULTO</name>
<evidence type="ECO:0000250" key="1"/>
<evidence type="ECO:0000305" key="2"/>
<keyword id="KW-0386">Hypusine biosynthesis</keyword>
<keyword id="KW-0520">NAD</keyword>
<keyword id="KW-1185">Reference proteome</keyword>
<keyword id="KW-0808">Transferase</keyword>
<dbReference type="EC" id="2.5.1.46"/>
<dbReference type="EMBL" id="BA000023">
    <property type="protein sequence ID" value="BAB66337.1"/>
    <property type="molecule type" value="Genomic_DNA"/>
</dbReference>
<dbReference type="RefSeq" id="WP_010979315.1">
    <property type="nucleotide sequence ID" value="NC_003106.2"/>
</dbReference>
<dbReference type="SMR" id="Q971T3"/>
<dbReference type="STRING" id="273063.STK_12930"/>
<dbReference type="GeneID" id="1459295"/>
<dbReference type="KEGG" id="sto:STK_12930"/>
<dbReference type="PATRIC" id="fig|273063.9.peg.1454"/>
<dbReference type="eggNOG" id="arCOG04142">
    <property type="taxonomic scope" value="Archaea"/>
</dbReference>
<dbReference type="OrthoDB" id="17730at2157"/>
<dbReference type="UniPathway" id="UPA00354"/>
<dbReference type="Proteomes" id="UP000001015">
    <property type="component" value="Chromosome"/>
</dbReference>
<dbReference type="GO" id="GO:0005737">
    <property type="term" value="C:cytoplasm"/>
    <property type="evidence" value="ECO:0007669"/>
    <property type="project" value="TreeGrafter"/>
</dbReference>
<dbReference type="GO" id="GO:0034038">
    <property type="term" value="F:deoxyhypusine synthase activity"/>
    <property type="evidence" value="ECO:0007669"/>
    <property type="project" value="UniProtKB-UniRule"/>
</dbReference>
<dbReference type="FunFam" id="3.40.910.10:FF:000007">
    <property type="entry name" value="Probable deoxyhypusine synthase"/>
    <property type="match status" value="1"/>
</dbReference>
<dbReference type="Gene3D" id="3.40.910.10">
    <property type="entry name" value="Deoxyhypusine synthase"/>
    <property type="match status" value="1"/>
</dbReference>
<dbReference type="HAMAP" id="MF_00153">
    <property type="entry name" value="DHS"/>
    <property type="match status" value="1"/>
</dbReference>
<dbReference type="InterPro" id="IPR022899">
    <property type="entry name" value="Deoxyhypus_synthase_arc"/>
</dbReference>
<dbReference type="InterPro" id="IPR002773">
    <property type="entry name" value="Deoxyhypusine_synthase"/>
</dbReference>
<dbReference type="InterPro" id="IPR036982">
    <property type="entry name" value="Deoxyhypusine_synthase_sf"/>
</dbReference>
<dbReference type="InterPro" id="IPR029035">
    <property type="entry name" value="DHS-like_NAD/FAD-binding_dom"/>
</dbReference>
<dbReference type="NCBIfam" id="NF002294">
    <property type="entry name" value="PRK01221.1"/>
    <property type="match status" value="1"/>
</dbReference>
<dbReference type="PANTHER" id="PTHR11703">
    <property type="entry name" value="DEOXYHYPUSINE SYNTHASE"/>
    <property type="match status" value="1"/>
</dbReference>
<dbReference type="PANTHER" id="PTHR11703:SF0">
    <property type="entry name" value="DEOXYHYPUSINE SYNTHASE"/>
    <property type="match status" value="1"/>
</dbReference>
<dbReference type="Pfam" id="PF01916">
    <property type="entry name" value="DS"/>
    <property type="match status" value="1"/>
</dbReference>
<dbReference type="SUPFAM" id="SSF52467">
    <property type="entry name" value="DHS-like NAD/FAD-binding domain"/>
    <property type="match status" value="1"/>
</dbReference>
<proteinExistence type="inferred from homology"/>
<organism>
    <name type="scientific">Sulfurisphaera tokodaii (strain DSM 16993 / JCM 10545 / NBRC 100140 / 7)</name>
    <name type="common">Sulfolobus tokodaii</name>
    <dbReference type="NCBI Taxonomy" id="273063"/>
    <lineage>
        <taxon>Archaea</taxon>
        <taxon>Thermoproteota</taxon>
        <taxon>Thermoprotei</taxon>
        <taxon>Sulfolobales</taxon>
        <taxon>Sulfolobaceae</taxon>
        <taxon>Sulfurisphaera</taxon>
    </lineage>
</organism>
<comment type="function">
    <text evidence="1">Catalyzes the NAD-dependent oxidative cleavage of spermidine and the subsequent transfer of the butylamine moiety of spermidine to the epsilon-amino group of a specific lysine residue of the eIF-5A precursor protein to form the intermediate deoxyhypusine residue.</text>
</comment>
<comment type="catalytic activity">
    <reaction>
        <text>[eIF5A protein]-L-lysine + spermidine = [eIF5A protein]-deoxyhypusine + propane-1,3-diamine</text>
        <dbReference type="Rhea" id="RHEA:33299"/>
        <dbReference type="Rhea" id="RHEA-COMP:10143"/>
        <dbReference type="Rhea" id="RHEA-COMP:10144"/>
        <dbReference type="ChEBI" id="CHEBI:29969"/>
        <dbReference type="ChEBI" id="CHEBI:57484"/>
        <dbReference type="ChEBI" id="CHEBI:57834"/>
        <dbReference type="ChEBI" id="CHEBI:82657"/>
        <dbReference type="EC" id="2.5.1.46"/>
    </reaction>
</comment>
<comment type="cofactor">
    <cofactor evidence="1">
        <name>NAD(+)</name>
        <dbReference type="ChEBI" id="CHEBI:57540"/>
    </cofactor>
</comment>
<comment type="pathway">
    <text>Protein modification; eIF5A hypusination.</text>
</comment>
<comment type="similarity">
    <text evidence="2">Belongs to the deoxyhypusine synthase family.</text>
</comment>
<sequence length="311" mass="35303">MKREELLVEEIKDLTLEELKGYADFYKILDKVYGFTAESVVRGVKILKDMIKEADLRFLSFTANLVSTGLRGLFADLIKQGYFNVIITTGGTIDHDIARSFGGKYYKGLFEYDDSMLRELEIHRLGNILVPMESYGKVIEDVVRKYMNEIVSIKKEWPVYELLWEFGKRISDENSILKAAYEKKVPIIVPGIIDGSFGTNLFIYSQFTQLKLNLFEDMKLIKDLIFSCKKSGALIIGGGISKHHTIWWNQFKDGLDYAIYITTAQEYDGSLSGAKPREAISWNKIKPTSENVVIYGDATIILPILSASLLG</sequence>
<reference key="1">
    <citation type="journal article" date="2001" name="DNA Res.">
        <title>Complete genome sequence of an aerobic thermoacidophilic Crenarchaeon, Sulfolobus tokodaii strain7.</title>
        <authorList>
            <person name="Kawarabayasi Y."/>
            <person name="Hino Y."/>
            <person name="Horikawa H."/>
            <person name="Jin-no K."/>
            <person name="Takahashi M."/>
            <person name="Sekine M."/>
            <person name="Baba S."/>
            <person name="Ankai A."/>
            <person name="Kosugi H."/>
            <person name="Hosoyama A."/>
            <person name="Fukui S."/>
            <person name="Nagai Y."/>
            <person name="Nishijima K."/>
            <person name="Otsuka R."/>
            <person name="Nakazawa H."/>
            <person name="Takamiya M."/>
            <person name="Kato Y."/>
            <person name="Yoshizawa T."/>
            <person name="Tanaka T."/>
            <person name="Kudoh Y."/>
            <person name="Yamazaki J."/>
            <person name="Kushida N."/>
            <person name="Oguchi A."/>
            <person name="Aoki K."/>
            <person name="Masuda S."/>
            <person name="Yanagii M."/>
            <person name="Nishimura M."/>
            <person name="Yamagishi A."/>
            <person name="Oshima T."/>
            <person name="Kikuchi H."/>
        </authorList>
    </citation>
    <scope>NUCLEOTIDE SEQUENCE [LARGE SCALE GENOMIC DNA]</scope>
    <source>
        <strain>DSM 16993 / JCM 10545 / NBRC 100140 / 7</strain>
    </source>
</reference>